<accession>B5YT93</accession>
<sequence length="152" mass="16919">MELTTRTLPARKHIALVAHDHCKQMLMSWVERHQPLLEQHVLYATGTTGNLISRATGMNVNAMLSGPMGGDQQVGALISEGKIDVLIFFWDPLNAVPHDPDVKALLRLATVWNIPVATNVATADFIIQSPHFNDAVDILIPDYQRYLADRLK</sequence>
<keyword id="KW-0456">Lyase</keyword>
<protein>
    <recommendedName>
        <fullName evidence="1">Methylglyoxal synthase</fullName>
        <shortName evidence="1">MGS</shortName>
        <ecNumber evidence="1">4.2.3.3</ecNumber>
    </recommendedName>
</protein>
<dbReference type="EC" id="4.2.3.3" evidence="1"/>
<dbReference type="EMBL" id="CP001164">
    <property type="protein sequence ID" value="ACI34539.1"/>
    <property type="molecule type" value="Genomic_DNA"/>
</dbReference>
<dbReference type="RefSeq" id="WP_000424181.1">
    <property type="nucleotide sequence ID" value="NC_011353.1"/>
</dbReference>
<dbReference type="SMR" id="B5YT93"/>
<dbReference type="GeneID" id="93776451"/>
<dbReference type="KEGG" id="ecf:ECH74115_1127"/>
<dbReference type="HOGENOM" id="CLU_120420_0_1_6"/>
<dbReference type="GO" id="GO:0005829">
    <property type="term" value="C:cytosol"/>
    <property type="evidence" value="ECO:0007669"/>
    <property type="project" value="TreeGrafter"/>
</dbReference>
<dbReference type="GO" id="GO:0008929">
    <property type="term" value="F:methylglyoxal synthase activity"/>
    <property type="evidence" value="ECO:0007669"/>
    <property type="project" value="UniProtKB-UniRule"/>
</dbReference>
<dbReference type="GO" id="GO:0019242">
    <property type="term" value="P:methylglyoxal biosynthetic process"/>
    <property type="evidence" value="ECO:0007669"/>
    <property type="project" value="UniProtKB-UniRule"/>
</dbReference>
<dbReference type="CDD" id="cd01422">
    <property type="entry name" value="MGS"/>
    <property type="match status" value="1"/>
</dbReference>
<dbReference type="FunFam" id="3.40.50.1380:FF:000002">
    <property type="entry name" value="Methylglyoxal synthase"/>
    <property type="match status" value="1"/>
</dbReference>
<dbReference type="Gene3D" id="3.40.50.1380">
    <property type="entry name" value="Methylglyoxal synthase-like domain"/>
    <property type="match status" value="1"/>
</dbReference>
<dbReference type="HAMAP" id="MF_00549">
    <property type="entry name" value="Methylglyoxal_synth"/>
    <property type="match status" value="1"/>
</dbReference>
<dbReference type="InterPro" id="IPR004363">
    <property type="entry name" value="Methylgl_synth"/>
</dbReference>
<dbReference type="InterPro" id="IPR018148">
    <property type="entry name" value="Methylglyoxal_synth_AS"/>
</dbReference>
<dbReference type="InterPro" id="IPR011607">
    <property type="entry name" value="MGS-like_dom"/>
</dbReference>
<dbReference type="InterPro" id="IPR036914">
    <property type="entry name" value="MGS-like_dom_sf"/>
</dbReference>
<dbReference type="NCBIfam" id="TIGR00160">
    <property type="entry name" value="MGSA"/>
    <property type="match status" value="1"/>
</dbReference>
<dbReference type="NCBIfam" id="NF003559">
    <property type="entry name" value="PRK05234.1"/>
    <property type="match status" value="1"/>
</dbReference>
<dbReference type="PANTHER" id="PTHR30492">
    <property type="entry name" value="METHYLGLYOXAL SYNTHASE"/>
    <property type="match status" value="1"/>
</dbReference>
<dbReference type="PANTHER" id="PTHR30492:SF0">
    <property type="entry name" value="METHYLGLYOXAL SYNTHASE"/>
    <property type="match status" value="1"/>
</dbReference>
<dbReference type="Pfam" id="PF02142">
    <property type="entry name" value="MGS"/>
    <property type="match status" value="1"/>
</dbReference>
<dbReference type="PIRSF" id="PIRSF006614">
    <property type="entry name" value="Methylglyox_syn"/>
    <property type="match status" value="1"/>
</dbReference>
<dbReference type="SMART" id="SM00851">
    <property type="entry name" value="MGS"/>
    <property type="match status" value="1"/>
</dbReference>
<dbReference type="SUPFAM" id="SSF52335">
    <property type="entry name" value="Methylglyoxal synthase-like"/>
    <property type="match status" value="1"/>
</dbReference>
<dbReference type="PROSITE" id="PS01335">
    <property type="entry name" value="METHYLGLYOXAL_SYNTH"/>
    <property type="match status" value="1"/>
</dbReference>
<dbReference type="PROSITE" id="PS51855">
    <property type="entry name" value="MGS"/>
    <property type="match status" value="1"/>
</dbReference>
<reference key="1">
    <citation type="journal article" date="2011" name="Proc. Natl. Acad. Sci. U.S.A.">
        <title>Genomic anatomy of Escherichia coli O157:H7 outbreaks.</title>
        <authorList>
            <person name="Eppinger M."/>
            <person name="Mammel M.K."/>
            <person name="Leclerc J.E."/>
            <person name="Ravel J."/>
            <person name="Cebula T.A."/>
        </authorList>
    </citation>
    <scope>NUCLEOTIDE SEQUENCE [LARGE SCALE GENOMIC DNA]</scope>
    <source>
        <strain>EC4115 / EHEC</strain>
    </source>
</reference>
<feature type="chain" id="PRO_1000128987" description="Methylglyoxal synthase">
    <location>
        <begin position="1"/>
        <end position="152"/>
    </location>
</feature>
<feature type="domain" description="MGS-like" evidence="1">
    <location>
        <begin position="6"/>
        <end position="152"/>
    </location>
</feature>
<feature type="active site" description="Proton donor/acceptor" evidence="1">
    <location>
        <position position="71"/>
    </location>
</feature>
<feature type="binding site" evidence="1">
    <location>
        <position position="19"/>
    </location>
    <ligand>
        <name>substrate</name>
    </ligand>
</feature>
<feature type="binding site" evidence="1">
    <location>
        <position position="23"/>
    </location>
    <ligand>
        <name>substrate</name>
    </ligand>
</feature>
<feature type="binding site" evidence="1">
    <location>
        <begin position="45"/>
        <end position="48"/>
    </location>
    <ligand>
        <name>substrate</name>
    </ligand>
</feature>
<feature type="binding site" evidence="1">
    <location>
        <begin position="65"/>
        <end position="66"/>
    </location>
    <ligand>
        <name>substrate</name>
    </ligand>
</feature>
<feature type="binding site" evidence="1">
    <location>
        <position position="98"/>
    </location>
    <ligand>
        <name>substrate</name>
    </ligand>
</feature>
<organism>
    <name type="scientific">Escherichia coli O157:H7 (strain EC4115 / EHEC)</name>
    <dbReference type="NCBI Taxonomy" id="444450"/>
    <lineage>
        <taxon>Bacteria</taxon>
        <taxon>Pseudomonadati</taxon>
        <taxon>Pseudomonadota</taxon>
        <taxon>Gammaproteobacteria</taxon>
        <taxon>Enterobacterales</taxon>
        <taxon>Enterobacteriaceae</taxon>
        <taxon>Escherichia</taxon>
    </lineage>
</organism>
<comment type="function">
    <text evidence="1">Catalyzes the formation of methylglyoxal from dihydroxyacetone phosphate.</text>
</comment>
<comment type="catalytic activity">
    <reaction evidence="1">
        <text>dihydroxyacetone phosphate = methylglyoxal + phosphate</text>
        <dbReference type="Rhea" id="RHEA:17937"/>
        <dbReference type="ChEBI" id="CHEBI:17158"/>
        <dbReference type="ChEBI" id="CHEBI:43474"/>
        <dbReference type="ChEBI" id="CHEBI:57642"/>
        <dbReference type="EC" id="4.2.3.3"/>
    </reaction>
</comment>
<comment type="similarity">
    <text evidence="1">Belongs to the methylglyoxal synthase family.</text>
</comment>
<proteinExistence type="inferred from homology"/>
<gene>
    <name evidence="1" type="primary">mgsA</name>
    <name type="ordered locus">ECH74115_1127</name>
</gene>
<name>MGSA_ECO5E</name>
<evidence type="ECO:0000255" key="1">
    <source>
        <dbReference type="HAMAP-Rule" id="MF_00549"/>
    </source>
</evidence>